<sequence length="223" mass="25037">SCMKAAPMKEVSIRGQGSLAYPGLQTQGNLETLSGPNDATRGLTSLADTFEHVIEELLDEQQVIQSSKENKDADLYSSRVMLSSQVPLEPPLLFLLEEYKNYLDAANMSMRVRRHSDPARRGELSVCDSTSEWVTAAEKKTAVDMSGATVTVLEKVPVPKGQLKQYFYETKCSSKGYAKEGCRGIDKRYWNSQCRTTQSYVRALTMDNKKRVGWRFIRIDTSC</sequence>
<protein>
    <recommendedName>
        <fullName evidence="3">Neurotrophic factor BDNF precursor form</fullName>
        <shortName>proBDNF</shortName>
    </recommendedName>
    <alternativeName>
        <fullName>Brain-derived neurotrophic factor</fullName>
    </alternativeName>
    <component>
        <recommendedName>
            <fullName>Neurotrophic factor BDNF</fullName>
        </recommendedName>
    </component>
</protein>
<reference key="1">
    <citation type="journal article" date="2006" name="Mol. Phylogenet. Evol.">
        <title>Dispersal and vicariance: the complex evolutionary history of boid snakes.</title>
        <authorList>
            <person name="Noonan B.P."/>
            <person name="Chippindale P.T."/>
        </authorList>
    </citation>
    <scope>NUCLEOTIDE SEQUENCE [GENOMIC DNA]</scope>
</reference>
<keyword id="KW-0165">Cleavage on pair of basic residues</keyword>
<keyword id="KW-1015">Disulfide bond</keyword>
<keyword id="KW-0325">Glycoprotein</keyword>
<keyword id="KW-0339">Growth factor</keyword>
<keyword id="KW-0964">Secreted</keyword>
<keyword id="KW-0732">Signal</keyword>
<proteinExistence type="inferred from homology"/>
<feature type="signal peptide" evidence="2">
    <location>
        <begin position="1" status="less than"/>
        <end position="5"/>
    </location>
</feature>
<feature type="propeptide" id="PRO_0000346658" evidence="1">
    <location>
        <begin position="6"/>
        <end position="114"/>
    </location>
</feature>
<feature type="chain" id="PRO_0000346659" description="Neurotrophic factor BDNF">
    <location>
        <begin position="115"/>
        <end position="223" status="greater than"/>
    </location>
</feature>
<feature type="glycosylation site" description="N-linked (GlcNAc...) asparagine" evidence="2">
    <location>
        <position position="107"/>
    </location>
</feature>
<feature type="disulfide bond" evidence="1">
    <location>
        <begin position="127"/>
        <end position="194"/>
    </location>
</feature>
<feature type="disulfide bond" evidence="1">
    <location>
        <begin position="172"/>
        <end position="223"/>
    </location>
</feature>
<feature type="non-terminal residue">
    <location>
        <position position="1"/>
    </location>
</feature>
<feature type="non-terminal residue">
    <location>
        <position position="223"/>
    </location>
</feature>
<dbReference type="EMBL" id="DQ465559">
    <property type="protein sequence ID" value="ABF56544.1"/>
    <property type="molecule type" value="Genomic_DNA"/>
</dbReference>
<dbReference type="SMR" id="Q1HN40"/>
<dbReference type="GlyCosmos" id="Q1HN40">
    <property type="glycosylation" value="1 site, No reported glycans"/>
</dbReference>
<dbReference type="GO" id="GO:0030424">
    <property type="term" value="C:axon"/>
    <property type="evidence" value="ECO:0007669"/>
    <property type="project" value="TreeGrafter"/>
</dbReference>
<dbReference type="GO" id="GO:0030425">
    <property type="term" value="C:dendrite"/>
    <property type="evidence" value="ECO:0007669"/>
    <property type="project" value="TreeGrafter"/>
</dbReference>
<dbReference type="GO" id="GO:0005615">
    <property type="term" value="C:extracellular space"/>
    <property type="evidence" value="ECO:0007669"/>
    <property type="project" value="TreeGrafter"/>
</dbReference>
<dbReference type="GO" id="GO:0008021">
    <property type="term" value="C:synaptic vesicle"/>
    <property type="evidence" value="ECO:0007669"/>
    <property type="project" value="TreeGrafter"/>
</dbReference>
<dbReference type="GO" id="GO:0008083">
    <property type="term" value="F:growth factor activity"/>
    <property type="evidence" value="ECO:0007669"/>
    <property type="project" value="UniProtKB-KW"/>
</dbReference>
<dbReference type="GO" id="GO:0005163">
    <property type="term" value="F:nerve growth factor receptor binding"/>
    <property type="evidence" value="ECO:0007669"/>
    <property type="project" value="TreeGrafter"/>
</dbReference>
<dbReference type="GO" id="GO:0007169">
    <property type="term" value="P:cell surface receptor protein tyrosine kinase signaling pathway"/>
    <property type="evidence" value="ECO:0007669"/>
    <property type="project" value="TreeGrafter"/>
</dbReference>
<dbReference type="GO" id="GO:0050804">
    <property type="term" value="P:modulation of chemical synaptic transmission"/>
    <property type="evidence" value="ECO:0007669"/>
    <property type="project" value="TreeGrafter"/>
</dbReference>
<dbReference type="GO" id="GO:0043524">
    <property type="term" value="P:negative regulation of neuron apoptotic process"/>
    <property type="evidence" value="ECO:0007669"/>
    <property type="project" value="TreeGrafter"/>
</dbReference>
<dbReference type="GO" id="GO:0021675">
    <property type="term" value="P:nerve development"/>
    <property type="evidence" value="ECO:0007669"/>
    <property type="project" value="TreeGrafter"/>
</dbReference>
<dbReference type="GO" id="GO:0038180">
    <property type="term" value="P:nerve growth factor signaling pathway"/>
    <property type="evidence" value="ECO:0007669"/>
    <property type="project" value="TreeGrafter"/>
</dbReference>
<dbReference type="GO" id="GO:0048812">
    <property type="term" value="P:neuron projection morphogenesis"/>
    <property type="evidence" value="ECO:0007669"/>
    <property type="project" value="TreeGrafter"/>
</dbReference>
<dbReference type="FunFam" id="2.10.90.10:FF:000002">
    <property type="entry name" value="Brain-derived neurotrophic factor"/>
    <property type="match status" value="1"/>
</dbReference>
<dbReference type="Gene3D" id="2.10.90.10">
    <property type="entry name" value="Cystine-knot cytokines"/>
    <property type="match status" value="1"/>
</dbReference>
<dbReference type="InterPro" id="IPR020430">
    <property type="entry name" value="Brain-der_neurotrophic_factor"/>
</dbReference>
<dbReference type="InterPro" id="IPR029034">
    <property type="entry name" value="Cystine-knot_cytokine"/>
</dbReference>
<dbReference type="InterPro" id="IPR020408">
    <property type="entry name" value="Nerve_growth_factor-like"/>
</dbReference>
<dbReference type="InterPro" id="IPR002072">
    <property type="entry name" value="Nerve_growth_factor-rel"/>
</dbReference>
<dbReference type="InterPro" id="IPR019846">
    <property type="entry name" value="Nerve_growth_factor_CS"/>
</dbReference>
<dbReference type="PANTHER" id="PTHR11589:SF3">
    <property type="entry name" value="BRAIN-DERIVED NEUROTROPHIC FACTOR"/>
    <property type="match status" value="1"/>
</dbReference>
<dbReference type="PANTHER" id="PTHR11589">
    <property type="entry name" value="NERVE GROWTH FACTOR NGF -RELATED"/>
    <property type="match status" value="1"/>
</dbReference>
<dbReference type="Pfam" id="PF00243">
    <property type="entry name" value="NGF"/>
    <property type="match status" value="1"/>
</dbReference>
<dbReference type="PIRSF" id="PIRSF001789">
    <property type="entry name" value="NGF"/>
    <property type="match status" value="1"/>
</dbReference>
<dbReference type="PRINTS" id="PR01912">
    <property type="entry name" value="BDNFACTOR"/>
</dbReference>
<dbReference type="PRINTS" id="PR00268">
    <property type="entry name" value="NGF"/>
</dbReference>
<dbReference type="SMART" id="SM00140">
    <property type="entry name" value="NGF"/>
    <property type="match status" value="1"/>
</dbReference>
<dbReference type="SUPFAM" id="SSF57501">
    <property type="entry name" value="Cystine-knot cytokines"/>
    <property type="match status" value="1"/>
</dbReference>
<dbReference type="PROSITE" id="PS00248">
    <property type="entry name" value="NGF_1"/>
    <property type="match status" value="1"/>
</dbReference>
<dbReference type="PROSITE" id="PS50270">
    <property type="entry name" value="NGF_2"/>
    <property type="match status" value="1"/>
</dbReference>
<gene>
    <name type="primary">BDNF</name>
</gene>
<comment type="function">
    <text evidence="1">Promotes the survival of neuronal populations that are all located either in the central nervous system or directly connected to it.</text>
</comment>
<comment type="subcellular location">
    <subcellularLocation>
        <location evidence="1">Secreted</location>
    </subcellularLocation>
</comment>
<comment type="similarity">
    <text evidence="3">Belongs to the NGF-beta family.</text>
</comment>
<evidence type="ECO:0000250" key="1"/>
<evidence type="ECO:0000255" key="2"/>
<evidence type="ECO:0000305" key="3"/>
<accession>Q1HN40</accession>
<name>BDNF_ASPME</name>
<organism>
    <name type="scientific">Aspidites melanocephalus</name>
    <name type="common">Black-headed python</name>
    <dbReference type="NCBI Taxonomy" id="51883"/>
    <lineage>
        <taxon>Eukaryota</taxon>
        <taxon>Metazoa</taxon>
        <taxon>Chordata</taxon>
        <taxon>Craniata</taxon>
        <taxon>Vertebrata</taxon>
        <taxon>Euteleostomi</taxon>
        <taxon>Lepidosauria</taxon>
        <taxon>Squamata</taxon>
        <taxon>Bifurcata</taxon>
        <taxon>Unidentata</taxon>
        <taxon>Episquamata</taxon>
        <taxon>Toxicofera</taxon>
        <taxon>Serpentes</taxon>
        <taxon>Henophidia</taxon>
        <taxon>Pythonidae</taxon>
        <taxon>Aspidites</taxon>
    </lineage>
</organism>